<comment type="function">
    <text evidence="1">Involved in the anomeric conversion of L-fucose.</text>
</comment>
<comment type="catalytic activity">
    <reaction evidence="1">
        <text>alpha-L-fucose = beta-L-fucose</text>
        <dbReference type="Rhea" id="RHEA:25580"/>
        <dbReference type="ChEBI" id="CHEBI:42548"/>
        <dbReference type="ChEBI" id="CHEBI:42589"/>
        <dbReference type="EC" id="5.1.3.29"/>
    </reaction>
</comment>
<comment type="pathway">
    <text evidence="1">Carbohydrate metabolism; L-fucose metabolism.</text>
</comment>
<comment type="subunit">
    <text evidence="1">Homodecamer.</text>
</comment>
<comment type="subcellular location">
    <subcellularLocation>
        <location evidence="1">Cytoplasm</location>
    </subcellularLocation>
</comment>
<comment type="similarity">
    <text evidence="1">Belongs to the RbsD / FucU family. FucU mutarotase subfamily.</text>
</comment>
<evidence type="ECO:0000255" key="1">
    <source>
        <dbReference type="HAMAP-Rule" id="MF_01662"/>
    </source>
</evidence>
<proteinExistence type="inferred from homology"/>
<sequence>MLKTISPLISPELLKVLAEMGHGDEIIFSDAHFPAHSMGPQVIRADGLLVSDLLQAIIPLFELDSYAPPLVMMAAVEGDTLDPEVERRYRNALSLQAPCPDIIRINRFAFYERAQKAFAIVITGERAKYGNILLKKGVTP</sequence>
<keyword id="KW-0119">Carbohydrate metabolism</keyword>
<keyword id="KW-0963">Cytoplasm</keyword>
<keyword id="KW-0294">Fucose metabolism</keyword>
<keyword id="KW-0413">Isomerase</keyword>
<feature type="chain" id="PRO_0000344539" description="L-fucose mutarotase">
    <location>
        <begin position="1"/>
        <end position="140"/>
    </location>
</feature>
<feature type="active site" description="Proton donor" evidence="1">
    <location>
        <position position="22"/>
    </location>
</feature>
<feature type="binding site" evidence="1">
    <location>
        <position position="30"/>
    </location>
    <ligand>
        <name>substrate</name>
    </ligand>
</feature>
<feature type="binding site" evidence="1">
    <location>
        <position position="107"/>
    </location>
    <ligand>
        <name>substrate</name>
    </ligand>
</feature>
<feature type="binding site" evidence="1">
    <location>
        <begin position="129"/>
        <end position="131"/>
    </location>
    <ligand>
        <name>substrate</name>
    </ligand>
</feature>
<gene>
    <name evidence="1" type="primary">fucU</name>
    <name type="ordered locus">ECDH10B_2973</name>
</gene>
<dbReference type="EC" id="5.1.3.29" evidence="1"/>
<dbReference type="EMBL" id="CP000948">
    <property type="protein sequence ID" value="ACB03917.1"/>
    <property type="molecule type" value="Genomic_DNA"/>
</dbReference>
<dbReference type="RefSeq" id="WP_000920840.1">
    <property type="nucleotide sequence ID" value="NC_010473.1"/>
</dbReference>
<dbReference type="SMR" id="B1XDL3"/>
<dbReference type="GeneID" id="93779194"/>
<dbReference type="KEGG" id="ecd:ECDH10B_2973"/>
<dbReference type="HOGENOM" id="CLU_120075_1_0_6"/>
<dbReference type="UniPathway" id="UPA00956"/>
<dbReference type="GO" id="GO:0005737">
    <property type="term" value="C:cytoplasm"/>
    <property type="evidence" value="ECO:0007669"/>
    <property type="project" value="UniProtKB-SubCell"/>
</dbReference>
<dbReference type="GO" id="GO:0042806">
    <property type="term" value="F:fucose binding"/>
    <property type="evidence" value="ECO:0007669"/>
    <property type="project" value="InterPro"/>
</dbReference>
<dbReference type="GO" id="GO:0036373">
    <property type="term" value="F:L-fucose mutarotase activity"/>
    <property type="evidence" value="ECO:0007669"/>
    <property type="project" value="UniProtKB-EC"/>
</dbReference>
<dbReference type="GO" id="GO:0036065">
    <property type="term" value="P:fucosylation"/>
    <property type="evidence" value="ECO:0007669"/>
    <property type="project" value="TreeGrafter"/>
</dbReference>
<dbReference type="GO" id="GO:0042354">
    <property type="term" value="P:L-fucose metabolic process"/>
    <property type="evidence" value="ECO:0007669"/>
    <property type="project" value="UniProtKB-UniRule"/>
</dbReference>
<dbReference type="FunFam" id="3.40.1650.10:FF:000001">
    <property type="entry name" value="L-fucose mutarotase"/>
    <property type="match status" value="1"/>
</dbReference>
<dbReference type="Gene3D" id="3.40.1650.10">
    <property type="entry name" value="RbsD-like domain"/>
    <property type="match status" value="1"/>
</dbReference>
<dbReference type="HAMAP" id="MF_01662">
    <property type="entry name" value="L_fucose_rotase"/>
    <property type="match status" value="1"/>
</dbReference>
<dbReference type="InterPro" id="IPR023751">
    <property type="entry name" value="L-fucose_mutarotase"/>
</dbReference>
<dbReference type="InterPro" id="IPR023750">
    <property type="entry name" value="RbsD-like_sf"/>
</dbReference>
<dbReference type="InterPro" id="IPR050443">
    <property type="entry name" value="RbsD/FucU_mutarotase"/>
</dbReference>
<dbReference type="InterPro" id="IPR007721">
    <property type="entry name" value="RbsD_FucU"/>
</dbReference>
<dbReference type="NCBIfam" id="NF011949">
    <property type="entry name" value="PRK15420.1"/>
    <property type="match status" value="1"/>
</dbReference>
<dbReference type="PANTHER" id="PTHR31690">
    <property type="entry name" value="FUCOSE MUTAROTASE"/>
    <property type="match status" value="1"/>
</dbReference>
<dbReference type="PANTHER" id="PTHR31690:SF4">
    <property type="entry name" value="FUCOSE MUTAROTASE"/>
    <property type="match status" value="1"/>
</dbReference>
<dbReference type="Pfam" id="PF05025">
    <property type="entry name" value="RbsD_FucU"/>
    <property type="match status" value="1"/>
</dbReference>
<dbReference type="SUPFAM" id="SSF102546">
    <property type="entry name" value="RbsD-like"/>
    <property type="match status" value="1"/>
</dbReference>
<accession>B1XDL3</accession>
<organism>
    <name type="scientific">Escherichia coli (strain K12 / DH10B)</name>
    <dbReference type="NCBI Taxonomy" id="316385"/>
    <lineage>
        <taxon>Bacteria</taxon>
        <taxon>Pseudomonadati</taxon>
        <taxon>Pseudomonadota</taxon>
        <taxon>Gammaproteobacteria</taxon>
        <taxon>Enterobacterales</taxon>
        <taxon>Enterobacteriaceae</taxon>
        <taxon>Escherichia</taxon>
    </lineage>
</organism>
<protein>
    <recommendedName>
        <fullName evidence="1">L-fucose mutarotase</fullName>
        <ecNumber evidence="1">5.1.3.29</ecNumber>
    </recommendedName>
    <alternativeName>
        <fullName evidence="1">Fucose 1-epimerase</fullName>
    </alternativeName>
    <alternativeName>
        <fullName evidence="1">Type-2 mutarotase</fullName>
    </alternativeName>
</protein>
<name>FUCM_ECODH</name>
<reference key="1">
    <citation type="journal article" date="2008" name="J. Bacteriol.">
        <title>The complete genome sequence of Escherichia coli DH10B: insights into the biology of a laboratory workhorse.</title>
        <authorList>
            <person name="Durfee T."/>
            <person name="Nelson R."/>
            <person name="Baldwin S."/>
            <person name="Plunkett G. III"/>
            <person name="Burland V."/>
            <person name="Mau B."/>
            <person name="Petrosino J.F."/>
            <person name="Qin X."/>
            <person name="Muzny D.M."/>
            <person name="Ayele M."/>
            <person name="Gibbs R.A."/>
            <person name="Csorgo B."/>
            <person name="Posfai G."/>
            <person name="Weinstock G.M."/>
            <person name="Blattner F.R."/>
        </authorList>
    </citation>
    <scope>NUCLEOTIDE SEQUENCE [LARGE SCALE GENOMIC DNA]</scope>
    <source>
        <strain>K12 / DH10B</strain>
    </source>
</reference>